<name>KLH15_MOUSE</name>
<evidence type="ECO:0000250" key="1">
    <source>
        <dbReference type="UniProtKB" id="Q96M94"/>
    </source>
</evidence>
<reference key="1">
    <citation type="journal article" date="2005" name="Science">
        <title>The transcriptional landscape of the mammalian genome.</title>
        <authorList>
            <person name="Carninci P."/>
            <person name="Kasukawa T."/>
            <person name="Katayama S."/>
            <person name="Gough J."/>
            <person name="Frith M.C."/>
            <person name="Maeda N."/>
            <person name="Oyama R."/>
            <person name="Ravasi T."/>
            <person name="Lenhard B."/>
            <person name="Wells C."/>
            <person name="Kodzius R."/>
            <person name="Shimokawa K."/>
            <person name="Bajic V.B."/>
            <person name="Brenner S.E."/>
            <person name="Batalov S."/>
            <person name="Forrest A.R."/>
            <person name="Zavolan M."/>
            <person name="Davis M.J."/>
            <person name="Wilming L.G."/>
            <person name="Aidinis V."/>
            <person name="Allen J.E."/>
            <person name="Ambesi-Impiombato A."/>
            <person name="Apweiler R."/>
            <person name="Aturaliya R.N."/>
            <person name="Bailey T.L."/>
            <person name="Bansal M."/>
            <person name="Baxter L."/>
            <person name="Beisel K.W."/>
            <person name="Bersano T."/>
            <person name="Bono H."/>
            <person name="Chalk A.M."/>
            <person name="Chiu K.P."/>
            <person name="Choudhary V."/>
            <person name="Christoffels A."/>
            <person name="Clutterbuck D.R."/>
            <person name="Crowe M.L."/>
            <person name="Dalla E."/>
            <person name="Dalrymple B.P."/>
            <person name="de Bono B."/>
            <person name="Della Gatta G."/>
            <person name="di Bernardo D."/>
            <person name="Down T."/>
            <person name="Engstrom P."/>
            <person name="Fagiolini M."/>
            <person name="Faulkner G."/>
            <person name="Fletcher C.F."/>
            <person name="Fukushima T."/>
            <person name="Furuno M."/>
            <person name="Futaki S."/>
            <person name="Gariboldi M."/>
            <person name="Georgii-Hemming P."/>
            <person name="Gingeras T.R."/>
            <person name="Gojobori T."/>
            <person name="Green R.E."/>
            <person name="Gustincich S."/>
            <person name="Harbers M."/>
            <person name="Hayashi Y."/>
            <person name="Hensch T.K."/>
            <person name="Hirokawa N."/>
            <person name="Hill D."/>
            <person name="Huminiecki L."/>
            <person name="Iacono M."/>
            <person name="Ikeo K."/>
            <person name="Iwama A."/>
            <person name="Ishikawa T."/>
            <person name="Jakt M."/>
            <person name="Kanapin A."/>
            <person name="Katoh M."/>
            <person name="Kawasawa Y."/>
            <person name="Kelso J."/>
            <person name="Kitamura H."/>
            <person name="Kitano H."/>
            <person name="Kollias G."/>
            <person name="Krishnan S.P."/>
            <person name="Kruger A."/>
            <person name="Kummerfeld S.K."/>
            <person name="Kurochkin I.V."/>
            <person name="Lareau L.F."/>
            <person name="Lazarevic D."/>
            <person name="Lipovich L."/>
            <person name="Liu J."/>
            <person name="Liuni S."/>
            <person name="McWilliam S."/>
            <person name="Madan Babu M."/>
            <person name="Madera M."/>
            <person name="Marchionni L."/>
            <person name="Matsuda H."/>
            <person name="Matsuzawa S."/>
            <person name="Miki H."/>
            <person name="Mignone F."/>
            <person name="Miyake S."/>
            <person name="Morris K."/>
            <person name="Mottagui-Tabar S."/>
            <person name="Mulder N."/>
            <person name="Nakano N."/>
            <person name="Nakauchi H."/>
            <person name="Ng P."/>
            <person name="Nilsson R."/>
            <person name="Nishiguchi S."/>
            <person name="Nishikawa S."/>
            <person name="Nori F."/>
            <person name="Ohara O."/>
            <person name="Okazaki Y."/>
            <person name="Orlando V."/>
            <person name="Pang K.C."/>
            <person name="Pavan W.J."/>
            <person name="Pavesi G."/>
            <person name="Pesole G."/>
            <person name="Petrovsky N."/>
            <person name="Piazza S."/>
            <person name="Reed J."/>
            <person name="Reid J.F."/>
            <person name="Ring B.Z."/>
            <person name="Ringwald M."/>
            <person name="Rost B."/>
            <person name="Ruan Y."/>
            <person name="Salzberg S.L."/>
            <person name="Sandelin A."/>
            <person name="Schneider C."/>
            <person name="Schoenbach C."/>
            <person name="Sekiguchi K."/>
            <person name="Semple C.A."/>
            <person name="Seno S."/>
            <person name="Sessa L."/>
            <person name="Sheng Y."/>
            <person name="Shibata Y."/>
            <person name="Shimada H."/>
            <person name="Shimada K."/>
            <person name="Silva D."/>
            <person name="Sinclair B."/>
            <person name="Sperling S."/>
            <person name="Stupka E."/>
            <person name="Sugiura K."/>
            <person name="Sultana R."/>
            <person name="Takenaka Y."/>
            <person name="Taki K."/>
            <person name="Tammoja K."/>
            <person name="Tan S.L."/>
            <person name="Tang S."/>
            <person name="Taylor M.S."/>
            <person name="Tegner J."/>
            <person name="Teichmann S.A."/>
            <person name="Ueda H.R."/>
            <person name="van Nimwegen E."/>
            <person name="Verardo R."/>
            <person name="Wei C.L."/>
            <person name="Yagi K."/>
            <person name="Yamanishi H."/>
            <person name="Zabarovsky E."/>
            <person name="Zhu S."/>
            <person name="Zimmer A."/>
            <person name="Hide W."/>
            <person name="Bult C."/>
            <person name="Grimmond S.M."/>
            <person name="Teasdale R.D."/>
            <person name="Liu E.T."/>
            <person name="Brusic V."/>
            <person name="Quackenbush J."/>
            <person name="Wahlestedt C."/>
            <person name="Mattick J.S."/>
            <person name="Hume D.A."/>
            <person name="Kai C."/>
            <person name="Sasaki D."/>
            <person name="Tomaru Y."/>
            <person name="Fukuda S."/>
            <person name="Kanamori-Katayama M."/>
            <person name="Suzuki M."/>
            <person name="Aoki J."/>
            <person name="Arakawa T."/>
            <person name="Iida J."/>
            <person name="Imamura K."/>
            <person name="Itoh M."/>
            <person name="Kato T."/>
            <person name="Kawaji H."/>
            <person name="Kawagashira N."/>
            <person name="Kawashima T."/>
            <person name="Kojima M."/>
            <person name="Kondo S."/>
            <person name="Konno H."/>
            <person name="Nakano K."/>
            <person name="Ninomiya N."/>
            <person name="Nishio T."/>
            <person name="Okada M."/>
            <person name="Plessy C."/>
            <person name="Shibata K."/>
            <person name="Shiraki T."/>
            <person name="Suzuki S."/>
            <person name="Tagami M."/>
            <person name="Waki K."/>
            <person name="Watahiki A."/>
            <person name="Okamura-Oho Y."/>
            <person name="Suzuki H."/>
            <person name="Kawai J."/>
            <person name="Hayashizaki Y."/>
        </authorList>
    </citation>
    <scope>NUCLEOTIDE SEQUENCE [LARGE SCALE MRNA] (ISOFORMS 2 AND 3)</scope>
    <source>
        <strain>C57BL/6J</strain>
        <tissue>Embryonic head</tissue>
        <tissue>Thymus</tissue>
    </source>
</reference>
<reference key="2">
    <citation type="journal article" date="2009" name="PLoS Biol.">
        <title>Lineage-specific biology revealed by a finished genome assembly of the mouse.</title>
        <authorList>
            <person name="Church D.M."/>
            <person name="Goodstadt L."/>
            <person name="Hillier L.W."/>
            <person name="Zody M.C."/>
            <person name="Goldstein S."/>
            <person name="She X."/>
            <person name="Bult C.J."/>
            <person name="Agarwala R."/>
            <person name="Cherry J.L."/>
            <person name="DiCuccio M."/>
            <person name="Hlavina W."/>
            <person name="Kapustin Y."/>
            <person name="Meric P."/>
            <person name="Maglott D."/>
            <person name="Birtle Z."/>
            <person name="Marques A.C."/>
            <person name="Graves T."/>
            <person name="Zhou S."/>
            <person name="Teague B."/>
            <person name="Potamousis K."/>
            <person name="Churas C."/>
            <person name="Place M."/>
            <person name="Herschleb J."/>
            <person name="Runnheim R."/>
            <person name="Forrest D."/>
            <person name="Amos-Landgraf J."/>
            <person name="Schwartz D.C."/>
            <person name="Cheng Z."/>
            <person name="Lindblad-Toh K."/>
            <person name="Eichler E.E."/>
            <person name="Ponting C.P."/>
        </authorList>
    </citation>
    <scope>NUCLEOTIDE SEQUENCE [LARGE SCALE GENOMIC DNA]</scope>
    <source>
        <strain>C57BL/6J</strain>
    </source>
</reference>
<reference key="3">
    <citation type="submission" date="2005-07" db="EMBL/GenBank/DDBJ databases">
        <authorList>
            <person name="Mural R.J."/>
            <person name="Adams M.D."/>
            <person name="Myers E.W."/>
            <person name="Smith H.O."/>
            <person name="Venter J.C."/>
        </authorList>
    </citation>
    <scope>NUCLEOTIDE SEQUENCE [LARGE SCALE GENOMIC DNA]</scope>
</reference>
<reference key="4">
    <citation type="journal article" date="2004" name="Genome Res.">
        <title>The status, quality, and expansion of the NIH full-length cDNA project: the Mammalian Gene Collection (MGC).</title>
        <authorList>
            <consortium name="The MGC Project Team"/>
        </authorList>
    </citation>
    <scope>NUCLEOTIDE SEQUENCE [LARGE SCALE MRNA] (ISOFORMS 1 AND 3)</scope>
    <source>
        <strain>FVB/N</strain>
        <tissue>Brain</tissue>
        <tissue>Mammary cancer</tissue>
    </source>
</reference>
<feature type="chain" id="PRO_0000438648" description="Kelch-like protein 15">
    <location>
        <begin position="1"/>
        <end position="604"/>
    </location>
</feature>
<feature type="domain" description="BTB">
    <location>
        <begin position="31"/>
        <end position="98"/>
    </location>
</feature>
<feature type="domain" description="BACK">
    <location>
        <begin position="133"/>
        <end position="237"/>
    </location>
</feature>
<feature type="repeat" description="Kelch 1">
    <location>
        <begin position="328"/>
        <end position="379"/>
    </location>
</feature>
<feature type="repeat" description="Kelch 2">
    <location>
        <begin position="381"/>
        <end position="426"/>
    </location>
</feature>
<feature type="repeat" description="Kelch 3">
    <location>
        <begin position="428"/>
        <end position="473"/>
    </location>
</feature>
<feature type="repeat" description="Kelch 4">
    <location>
        <begin position="489"/>
        <end position="542"/>
    </location>
</feature>
<feature type="repeat" description="Kelch 5">
    <location>
        <begin position="544"/>
        <end position="590"/>
    </location>
</feature>
<feature type="splice variant" id="VSP_058695" description="In isoform 3.">
    <original>VK</original>
    <variation>TS</variation>
    <location>
        <begin position="236"/>
        <end position="237"/>
    </location>
</feature>
<feature type="splice variant" id="VSP_058696" description="In isoform 2.">
    <original>KTSEFYRYSRQL</original>
    <variation>GTFESDRQDSSI</variation>
    <location>
        <begin position="237"/>
        <end position="248"/>
    </location>
</feature>
<feature type="splice variant" id="VSP_058697" description="In isoform 3.">
    <location>
        <begin position="238"/>
        <end position="604"/>
    </location>
</feature>
<feature type="splice variant" id="VSP_058698" description="In isoform 2.">
    <location>
        <begin position="249"/>
        <end position="604"/>
    </location>
</feature>
<dbReference type="EMBL" id="AK081546">
    <property type="protein sequence ID" value="BAC38253.1"/>
    <property type="molecule type" value="mRNA"/>
</dbReference>
<dbReference type="EMBL" id="AK169500">
    <property type="protein sequence ID" value="BAE41202.1"/>
    <property type="molecule type" value="mRNA"/>
</dbReference>
<dbReference type="EMBL" id="AL646049">
    <property type="status" value="NOT_ANNOTATED_CDS"/>
    <property type="molecule type" value="Genomic_DNA"/>
</dbReference>
<dbReference type="EMBL" id="CH466637">
    <property type="protein sequence ID" value="EDL29751.1"/>
    <property type="molecule type" value="Genomic_DNA"/>
</dbReference>
<dbReference type="EMBL" id="BC036978">
    <property type="protein sequence ID" value="AAH36978.1"/>
    <property type="molecule type" value="mRNA"/>
</dbReference>
<dbReference type="EMBL" id="BC141165">
    <property type="protein sequence ID" value="AAI41166.1"/>
    <property type="molecule type" value="mRNA"/>
</dbReference>
<dbReference type="CCDS" id="CCDS30278.1">
    <molecule id="A2AAX3-1"/>
</dbReference>
<dbReference type="CCDS" id="CCDS30279.1">
    <molecule id="A2AAX3-2"/>
</dbReference>
<dbReference type="CCDS" id="CCDS41062.1">
    <molecule id="A2AAX3-3"/>
</dbReference>
<dbReference type="RefSeq" id="NP_001034148.1">
    <molecule id="A2AAX3-3"/>
    <property type="nucleotide sequence ID" value="NM_001039059.1"/>
</dbReference>
<dbReference type="RefSeq" id="NP_001034149.1">
    <molecule id="A2AAX3-2"/>
    <property type="nucleotide sequence ID" value="NM_001039060.1"/>
</dbReference>
<dbReference type="RefSeq" id="NP_001034150.1">
    <molecule id="A2AAX3-1"/>
    <property type="nucleotide sequence ID" value="NM_001039061.1"/>
</dbReference>
<dbReference type="RefSeq" id="NP_694805.1">
    <molecule id="A2AAX3-3"/>
    <property type="nucleotide sequence ID" value="NM_153165.2"/>
</dbReference>
<dbReference type="RefSeq" id="XP_006528049.1">
    <molecule id="A2AAX3-1"/>
    <property type="nucleotide sequence ID" value="XM_006527986.4"/>
</dbReference>
<dbReference type="RefSeq" id="XP_006528050.1">
    <molecule id="A2AAX3-1"/>
    <property type="nucleotide sequence ID" value="XM_006527987.4"/>
</dbReference>
<dbReference type="RefSeq" id="XP_006528051.1">
    <property type="nucleotide sequence ID" value="XM_006527988.3"/>
</dbReference>
<dbReference type="RefSeq" id="XP_006528052.1">
    <molecule id="A2AAX3-1"/>
    <property type="nucleotide sequence ID" value="XM_006527989.4"/>
</dbReference>
<dbReference type="RefSeq" id="XP_006528053.1">
    <molecule id="A2AAX3-1"/>
    <property type="nucleotide sequence ID" value="XM_006527990.5"/>
</dbReference>
<dbReference type="RefSeq" id="XP_006528054.1">
    <molecule id="A2AAX3-3"/>
    <property type="nucleotide sequence ID" value="XM_006527991.5"/>
</dbReference>
<dbReference type="RefSeq" id="XP_011245883.1">
    <molecule id="A2AAX3-1"/>
    <property type="nucleotide sequence ID" value="XM_011247581.1"/>
</dbReference>
<dbReference type="RefSeq" id="XP_030107182.1">
    <molecule id="A2AAX3-1"/>
    <property type="nucleotide sequence ID" value="XM_030251322.2"/>
</dbReference>
<dbReference type="RefSeq" id="XP_030107183.1">
    <molecule id="A2AAX3-3"/>
    <property type="nucleotide sequence ID" value="XM_030251323.2"/>
</dbReference>
<dbReference type="RefSeq" id="XP_036017818.1">
    <molecule id="A2AAX3-1"/>
    <property type="nucleotide sequence ID" value="XM_036161925.1"/>
</dbReference>
<dbReference type="SMR" id="A2AAX3"/>
<dbReference type="FunCoup" id="A2AAX3">
    <property type="interactions" value="354"/>
</dbReference>
<dbReference type="STRING" id="10090.ENSMUSP00000109548"/>
<dbReference type="iPTMnet" id="A2AAX3"/>
<dbReference type="PhosphoSitePlus" id="A2AAX3"/>
<dbReference type="jPOST" id="A2AAX3"/>
<dbReference type="PaxDb" id="10090-ENSMUSP00000094097"/>
<dbReference type="ProteomicsDB" id="263653">
    <molecule id="A2AAX3-1"/>
</dbReference>
<dbReference type="ProteomicsDB" id="263654">
    <molecule id="A2AAX3-2"/>
</dbReference>
<dbReference type="ProteomicsDB" id="263655">
    <molecule id="A2AAX3-3"/>
</dbReference>
<dbReference type="Antibodypedia" id="24558">
    <property type="antibodies" value="92 antibodies from 28 providers"/>
</dbReference>
<dbReference type="DNASU" id="236904"/>
<dbReference type="Ensembl" id="ENSMUST00000096369.10">
    <molecule id="A2AAX3-2"/>
    <property type="protein sequence ID" value="ENSMUSP00000094097.4"/>
    <property type="gene ID" value="ENSMUSG00000043929.17"/>
</dbReference>
<dbReference type="Ensembl" id="ENSMUST00000113908.8">
    <molecule id="A2AAX3-3"/>
    <property type="protein sequence ID" value="ENSMUSP00000109541.2"/>
    <property type="gene ID" value="ENSMUSG00000043929.17"/>
</dbReference>
<dbReference type="Ensembl" id="ENSMUST00000113911.9">
    <molecule id="A2AAX3-3"/>
    <property type="protein sequence ID" value="ENSMUSP00000109544.3"/>
    <property type="gene ID" value="ENSMUSG00000043929.17"/>
</dbReference>
<dbReference type="Ensembl" id="ENSMUST00000113915.2">
    <molecule id="A2AAX3-1"/>
    <property type="protein sequence ID" value="ENSMUSP00000109548.2"/>
    <property type="gene ID" value="ENSMUSG00000043929.17"/>
</dbReference>
<dbReference type="Ensembl" id="ENSMUST00000113916.10">
    <molecule id="A2AAX3-1"/>
    <property type="protein sequence ID" value="ENSMUSP00000109549.4"/>
    <property type="gene ID" value="ENSMUSG00000043929.17"/>
</dbReference>
<dbReference type="Ensembl" id="ENSMUST00000170594.8">
    <molecule id="A2AAX3-1"/>
    <property type="protein sequence ID" value="ENSMUSP00000129734.2"/>
    <property type="gene ID" value="ENSMUSG00000043929.17"/>
</dbReference>
<dbReference type="GeneID" id="236904"/>
<dbReference type="KEGG" id="mmu:236904"/>
<dbReference type="UCSC" id="uc009tte.1">
    <property type="organism name" value="mouse"/>
</dbReference>
<dbReference type="UCSC" id="uc009ttf.1">
    <property type="organism name" value="mouse"/>
</dbReference>
<dbReference type="UCSC" id="uc009tth.1">
    <molecule id="A2AAX3-1"/>
    <property type="organism name" value="mouse"/>
</dbReference>
<dbReference type="AGR" id="MGI:1923400"/>
<dbReference type="CTD" id="80311"/>
<dbReference type="MGI" id="MGI:1923400">
    <property type="gene designation" value="Klhl15"/>
</dbReference>
<dbReference type="VEuPathDB" id="HostDB:ENSMUSG00000043929"/>
<dbReference type="eggNOG" id="KOG4441">
    <property type="taxonomic scope" value="Eukaryota"/>
</dbReference>
<dbReference type="GeneTree" id="ENSGT00940000159116"/>
<dbReference type="HOGENOM" id="CLU_004253_16_1_1"/>
<dbReference type="InParanoid" id="A2AAX3"/>
<dbReference type="OMA" id="PRHNSWL"/>
<dbReference type="OrthoDB" id="45365at2759"/>
<dbReference type="PhylomeDB" id="A2AAX3"/>
<dbReference type="TreeFam" id="TF330633"/>
<dbReference type="UniPathway" id="UPA00143"/>
<dbReference type="BioGRID-ORCS" id="236904">
    <property type="hits" value="2 hits in 76 CRISPR screens"/>
</dbReference>
<dbReference type="PRO" id="PR:A2AAX3"/>
<dbReference type="Proteomes" id="UP000000589">
    <property type="component" value="Chromosome X"/>
</dbReference>
<dbReference type="RNAct" id="A2AAX3">
    <property type="molecule type" value="protein"/>
</dbReference>
<dbReference type="Bgee" id="ENSMUSG00000043929">
    <property type="expression patterns" value="Expressed in spermatid and 230 other cell types or tissues"/>
</dbReference>
<dbReference type="ExpressionAtlas" id="A2AAX3">
    <property type="expression patterns" value="baseline and differential"/>
</dbReference>
<dbReference type="GO" id="GO:0031463">
    <property type="term" value="C:Cul3-RING ubiquitin ligase complex"/>
    <property type="evidence" value="ECO:0007669"/>
    <property type="project" value="Ensembl"/>
</dbReference>
<dbReference type="GO" id="GO:0005634">
    <property type="term" value="C:nucleus"/>
    <property type="evidence" value="ECO:0000250"/>
    <property type="project" value="UniProtKB"/>
</dbReference>
<dbReference type="GO" id="GO:1990756">
    <property type="term" value="F:ubiquitin-like ligase-substrate adaptor activity"/>
    <property type="evidence" value="ECO:0000250"/>
    <property type="project" value="UniProtKB"/>
</dbReference>
<dbReference type="GO" id="GO:2000042">
    <property type="term" value="P:negative regulation of double-strand break repair via homologous recombination"/>
    <property type="evidence" value="ECO:0000250"/>
    <property type="project" value="UniProtKB"/>
</dbReference>
<dbReference type="GO" id="GO:0071630">
    <property type="term" value="P:nuclear protein quality control by the ubiquitin-proteasome system"/>
    <property type="evidence" value="ECO:0000250"/>
    <property type="project" value="UniProtKB"/>
</dbReference>
<dbReference type="GO" id="GO:0016567">
    <property type="term" value="P:protein ubiquitination"/>
    <property type="evidence" value="ECO:0007669"/>
    <property type="project" value="UniProtKB-UniPathway"/>
</dbReference>
<dbReference type="GO" id="GO:0006511">
    <property type="term" value="P:ubiquitin-dependent protein catabolic process"/>
    <property type="evidence" value="ECO:0000250"/>
    <property type="project" value="UniProtKB"/>
</dbReference>
<dbReference type="CDD" id="cd18454">
    <property type="entry name" value="BACK_KLHL15"/>
    <property type="match status" value="1"/>
</dbReference>
<dbReference type="CDD" id="cd18244">
    <property type="entry name" value="BTB_POZ_KLHL15"/>
    <property type="match status" value="1"/>
</dbReference>
<dbReference type="FunFam" id="3.30.710.10:FF:000087">
    <property type="entry name" value="Kelch-like family member 15"/>
    <property type="match status" value="1"/>
</dbReference>
<dbReference type="FunFam" id="1.25.40.420:FF:000009">
    <property type="entry name" value="Kelch-like protein 15"/>
    <property type="match status" value="1"/>
</dbReference>
<dbReference type="FunFam" id="2.120.10.80:FF:000014">
    <property type="entry name" value="Kelch-like protein 15"/>
    <property type="match status" value="1"/>
</dbReference>
<dbReference type="Gene3D" id="1.25.40.420">
    <property type="match status" value="1"/>
</dbReference>
<dbReference type="Gene3D" id="2.120.10.80">
    <property type="entry name" value="Kelch-type beta propeller"/>
    <property type="match status" value="1"/>
</dbReference>
<dbReference type="Gene3D" id="3.30.710.10">
    <property type="entry name" value="Potassium Channel Kv1.1, Chain A"/>
    <property type="match status" value="1"/>
</dbReference>
<dbReference type="InterPro" id="IPR011705">
    <property type="entry name" value="BACK"/>
</dbReference>
<dbReference type="InterPro" id="IPR017096">
    <property type="entry name" value="BTB-kelch_protein"/>
</dbReference>
<dbReference type="InterPro" id="IPR000210">
    <property type="entry name" value="BTB/POZ_dom"/>
</dbReference>
<dbReference type="InterPro" id="IPR030597">
    <property type="entry name" value="BTB_POZ_KLHL15"/>
</dbReference>
<dbReference type="InterPro" id="IPR015915">
    <property type="entry name" value="Kelch-typ_b-propeller"/>
</dbReference>
<dbReference type="InterPro" id="IPR006652">
    <property type="entry name" value="Kelch_1"/>
</dbReference>
<dbReference type="InterPro" id="IPR047030">
    <property type="entry name" value="KLHL15_BACK"/>
</dbReference>
<dbReference type="InterPro" id="IPR011333">
    <property type="entry name" value="SKP1/BTB/POZ_sf"/>
</dbReference>
<dbReference type="PANTHER" id="PTHR45632:SF12">
    <property type="entry name" value="KELCH-LIKE PROTEIN 15"/>
    <property type="match status" value="1"/>
</dbReference>
<dbReference type="PANTHER" id="PTHR45632">
    <property type="entry name" value="LD33804P"/>
    <property type="match status" value="1"/>
</dbReference>
<dbReference type="Pfam" id="PF07707">
    <property type="entry name" value="BACK"/>
    <property type="match status" value="1"/>
</dbReference>
<dbReference type="Pfam" id="PF00651">
    <property type="entry name" value="BTB"/>
    <property type="match status" value="1"/>
</dbReference>
<dbReference type="Pfam" id="PF01344">
    <property type="entry name" value="Kelch_1"/>
    <property type="match status" value="2"/>
</dbReference>
<dbReference type="Pfam" id="PF13964">
    <property type="entry name" value="Kelch_6"/>
    <property type="match status" value="1"/>
</dbReference>
<dbReference type="PIRSF" id="PIRSF037037">
    <property type="entry name" value="Kelch-like_protein_gigaxonin"/>
    <property type="match status" value="1"/>
</dbReference>
<dbReference type="SMART" id="SM00875">
    <property type="entry name" value="BACK"/>
    <property type="match status" value="1"/>
</dbReference>
<dbReference type="SMART" id="SM00225">
    <property type="entry name" value="BTB"/>
    <property type="match status" value="1"/>
</dbReference>
<dbReference type="SMART" id="SM00612">
    <property type="entry name" value="Kelch"/>
    <property type="match status" value="5"/>
</dbReference>
<dbReference type="SUPFAM" id="SSF117281">
    <property type="entry name" value="Kelch motif"/>
    <property type="match status" value="1"/>
</dbReference>
<dbReference type="SUPFAM" id="SSF54695">
    <property type="entry name" value="POZ domain"/>
    <property type="match status" value="1"/>
</dbReference>
<dbReference type="PROSITE" id="PS50097">
    <property type="entry name" value="BTB"/>
    <property type="match status" value="1"/>
</dbReference>
<keyword id="KW-0025">Alternative splicing</keyword>
<keyword id="KW-0880">Kelch repeat</keyword>
<keyword id="KW-0539">Nucleus</keyword>
<keyword id="KW-1185">Reference proteome</keyword>
<keyword id="KW-0677">Repeat</keyword>
<keyword id="KW-0833">Ubl conjugation pathway</keyword>
<protein>
    <recommendedName>
        <fullName>Kelch-like protein 15</fullName>
    </recommendedName>
</protein>
<sequence>MAGDVEGFCSSIHDTSVSAGFRALYEEGLLLDVTLVIEDHQFQAHKALLATQSDYFRIMFTADMRERDQDKIHLKGLTATGFSHVLQFMYYGTIELSMNTVHEILQAAMYVQLIEVVKFCCSFLLAKICLENCAEIMRLLDDFGVNIEGVREKLDAFLLDNFVPLMSRPDFLSYLSFEKLMSYLDNDHLSRFPEIELYEAVQSWLRHDRRRWRHTDTIIQNIRFCLMTPSSVFEKVKTSEFYRYSRQLRYEVDQALNYFQNVHQQPLLDMKSSRIRSAKPQTTVFRGMIGHSMVNSKILLLKKPRVWWELEGPQVPLRPDCLAIVNNFVFLLGGEELGPDGEFHASSKVFRYDPRQNSWLRMADMSVPRSEFAVGVIGKFIYAVAGRTRDETFYSTERYDITNDKWEFVDPYPVNKYGHEGTVLNNKLFITGGITSSSTSKQVCVFDPSKEGTIEQRTRRTQVVTNCWENKSKMNYARCFHKMISYNGKLYVFGGVCVILRASFESQGCPSTEVYNPDTDQWTILASMPIGRSGHGVTVLDKQIMVLGGLCYNGHYSDSILTFDPDENKWKEDEYPRMPCKLDGLQVCNLHFPDYVLDEVRRCN</sequence>
<accession>A2AAX3</accession>
<accession>Q3TEP6</accession>
<accession>Q8K1Y4</accession>
<comment type="function">
    <text evidence="1">Substrate-specific adapter for CUL3 E3 ubiquitin-protein ligase complex. Acts as an adapter for CUL3 to target the serine/threonine-protein phosphatase 2A (PP2A) subunit PPP2R5B for ubiquitination and subsequent proteasomal degradation, thus promoting exchange with other regulatory subunits and regulating PP2A holoenzyme composition. Acts as an adapter for CUL3 to target the DNA-end resection factor RBBP8/CtIP for ubiquitination and subsequent proteasomal degradation. Through the regulation of RBBP8/CtIP protein turnover, plays a key role in DNA damage response, favoring DNA double-strand repair through error-prone non-homologous end joining (NHEJ) over error-free, RBBP8-mediated homologous recombination (HR).</text>
</comment>
<comment type="pathway">
    <text>Protein modification; protein ubiquitination.</text>
</comment>
<comment type="subunit">
    <text evidence="1">Homodimer. Dimerization does not affect PPP2R5B-binding, but is required for its proteasomal degradation. Interacts with CUL3. Directly interacts with PPP2R5B; this interaction leads to PPP2R5B proteasomal degradation. Interacts with RBBP8/CtIP; this interaction leads to RBBP8 proteasomal degradation. Interacts with PACMP micropeptide; interaction prevents ubiquitination and degradation of RBBP8/CtIP.</text>
</comment>
<comment type="subcellular location">
    <subcellularLocation>
        <location evidence="1">Nucleus</location>
    </subcellularLocation>
</comment>
<comment type="alternative products">
    <event type="alternative splicing"/>
    <isoform>
        <id>A2AAX3-1</id>
        <name>1</name>
        <sequence type="displayed"/>
    </isoform>
    <isoform>
        <id>A2AAX3-2</id>
        <name>2</name>
        <sequence type="described" ref="VSP_058696 VSP_058698"/>
    </isoform>
    <isoform>
        <id>A2AAX3-3</id>
        <name>3</name>
        <sequence type="described" ref="VSP_058695 VSP_058697"/>
    </isoform>
</comment>
<proteinExistence type="evidence at transcript level"/>
<gene>
    <name type="primary">Klhl15</name>
</gene>
<organism>
    <name type="scientific">Mus musculus</name>
    <name type="common">Mouse</name>
    <dbReference type="NCBI Taxonomy" id="10090"/>
    <lineage>
        <taxon>Eukaryota</taxon>
        <taxon>Metazoa</taxon>
        <taxon>Chordata</taxon>
        <taxon>Craniata</taxon>
        <taxon>Vertebrata</taxon>
        <taxon>Euteleostomi</taxon>
        <taxon>Mammalia</taxon>
        <taxon>Eutheria</taxon>
        <taxon>Euarchontoglires</taxon>
        <taxon>Glires</taxon>
        <taxon>Rodentia</taxon>
        <taxon>Myomorpha</taxon>
        <taxon>Muroidea</taxon>
        <taxon>Muridae</taxon>
        <taxon>Murinae</taxon>
        <taxon>Mus</taxon>
        <taxon>Mus</taxon>
    </lineage>
</organism>